<feature type="chain" id="PRO_1000062057" description="Fatty acid metabolism regulator protein">
    <location>
        <begin position="1"/>
        <end position="239"/>
    </location>
</feature>
<feature type="domain" description="HTH gntR-type" evidence="1">
    <location>
        <begin position="6"/>
        <end position="74"/>
    </location>
</feature>
<feature type="DNA-binding region" description="H-T-H motif" evidence="1">
    <location>
        <begin position="34"/>
        <end position="53"/>
    </location>
</feature>
<protein>
    <recommendedName>
        <fullName evidence="1">Fatty acid metabolism regulator protein</fullName>
    </recommendedName>
</protein>
<proteinExistence type="inferred from homology"/>
<reference key="1">
    <citation type="journal article" date="2010" name="PLoS Genet.">
        <title>Genome sequence of the plant growth promoting endophytic bacterium Enterobacter sp. 638.</title>
        <authorList>
            <person name="Taghavi S."/>
            <person name="van der Lelie D."/>
            <person name="Hoffman A."/>
            <person name="Zhang Y.B."/>
            <person name="Walla M.D."/>
            <person name="Vangronsveld J."/>
            <person name="Newman L."/>
            <person name="Monchy S."/>
        </authorList>
    </citation>
    <scope>NUCLEOTIDE SEQUENCE [LARGE SCALE GENOMIC DNA]</scope>
    <source>
        <strain>638</strain>
    </source>
</reference>
<comment type="function">
    <text evidence="1">Multifunctional regulator of fatty acid metabolism.</text>
</comment>
<comment type="subunit">
    <text evidence="1">Homodimer.</text>
</comment>
<comment type="subcellular location">
    <subcellularLocation>
        <location evidence="1">Cytoplasm</location>
    </subcellularLocation>
</comment>
<evidence type="ECO:0000255" key="1">
    <source>
        <dbReference type="HAMAP-Rule" id="MF_00696"/>
    </source>
</evidence>
<organism>
    <name type="scientific">Enterobacter sp. (strain 638)</name>
    <dbReference type="NCBI Taxonomy" id="399742"/>
    <lineage>
        <taxon>Bacteria</taxon>
        <taxon>Pseudomonadati</taxon>
        <taxon>Pseudomonadota</taxon>
        <taxon>Gammaproteobacteria</taxon>
        <taxon>Enterobacterales</taxon>
        <taxon>Enterobacteriaceae</taxon>
        <taxon>Enterobacter</taxon>
    </lineage>
</organism>
<keyword id="KW-0010">Activator</keyword>
<keyword id="KW-0963">Cytoplasm</keyword>
<keyword id="KW-0238">DNA-binding</keyword>
<keyword id="KW-0276">Fatty acid metabolism</keyword>
<keyword id="KW-0443">Lipid metabolism</keyword>
<keyword id="KW-0678">Repressor</keyword>
<keyword id="KW-0804">Transcription</keyword>
<keyword id="KW-0805">Transcription regulation</keyword>
<name>FADR_ENT38</name>
<sequence length="239" mass="27027">MVIKAQSPAGFAEEYIIESIWNNRFAPGTILPAERELSELIGVTRTTLREVLQRLARDGWLTIQHGKPTKVNNFWETSGLNILETLARLDHESVPQLIDNLLSVRTNISTIFIRTAFRQHPDKALEVLATANAIEDHADAFATLDYNIFRGLAFASGNPIYGLIINGMKGLYTRIGRHYFANPEARSLALGFYHKLSEICSEGMHDQVYETVRRYGRDSGEIWHRMQKNLPGDLAIHGH</sequence>
<dbReference type="EMBL" id="CP000653">
    <property type="protein sequence ID" value="ABP61034.1"/>
    <property type="molecule type" value="Genomic_DNA"/>
</dbReference>
<dbReference type="RefSeq" id="WP_012017748.1">
    <property type="nucleotide sequence ID" value="NC_009436.1"/>
</dbReference>
<dbReference type="SMR" id="A4WBF4"/>
<dbReference type="STRING" id="399742.Ent638_2365"/>
<dbReference type="KEGG" id="ent:Ent638_2365"/>
<dbReference type="eggNOG" id="COG2186">
    <property type="taxonomic scope" value="Bacteria"/>
</dbReference>
<dbReference type="HOGENOM" id="CLU_017584_9_4_6"/>
<dbReference type="OrthoDB" id="5683977at2"/>
<dbReference type="Proteomes" id="UP000000230">
    <property type="component" value="Chromosome"/>
</dbReference>
<dbReference type="GO" id="GO:0005737">
    <property type="term" value="C:cytoplasm"/>
    <property type="evidence" value="ECO:0007669"/>
    <property type="project" value="UniProtKB-SubCell"/>
</dbReference>
<dbReference type="GO" id="GO:0003677">
    <property type="term" value="F:DNA binding"/>
    <property type="evidence" value="ECO:0007669"/>
    <property type="project" value="UniProtKB-KW"/>
</dbReference>
<dbReference type="GO" id="GO:0003700">
    <property type="term" value="F:DNA-binding transcription factor activity"/>
    <property type="evidence" value="ECO:0007669"/>
    <property type="project" value="UniProtKB-UniRule"/>
</dbReference>
<dbReference type="GO" id="GO:0000062">
    <property type="term" value="F:fatty-acyl-CoA binding"/>
    <property type="evidence" value="ECO:0007669"/>
    <property type="project" value="InterPro"/>
</dbReference>
<dbReference type="GO" id="GO:0006631">
    <property type="term" value="P:fatty acid metabolic process"/>
    <property type="evidence" value="ECO:0007669"/>
    <property type="project" value="UniProtKB-KW"/>
</dbReference>
<dbReference type="GO" id="GO:0019217">
    <property type="term" value="P:regulation of fatty acid metabolic process"/>
    <property type="evidence" value="ECO:0007669"/>
    <property type="project" value="UniProtKB-UniRule"/>
</dbReference>
<dbReference type="CDD" id="cd07377">
    <property type="entry name" value="WHTH_GntR"/>
    <property type="match status" value="1"/>
</dbReference>
<dbReference type="FunFam" id="1.10.10.10:FF:000036">
    <property type="entry name" value="Fatty acid metabolism regulator protein"/>
    <property type="match status" value="1"/>
</dbReference>
<dbReference type="FunFam" id="1.20.120.530:FF:000003">
    <property type="entry name" value="Fatty acid metabolism regulator protein"/>
    <property type="match status" value="1"/>
</dbReference>
<dbReference type="Gene3D" id="1.20.120.530">
    <property type="entry name" value="GntR ligand-binding domain-like"/>
    <property type="match status" value="1"/>
</dbReference>
<dbReference type="Gene3D" id="1.10.10.10">
    <property type="entry name" value="Winged helix-like DNA-binding domain superfamily/Winged helix DNA-binding domain"/>
    <property type="match status" value="1"/>
</dbReference>
<dbReference type="HAMAP" id="MF_00696">
    <property type="entry name" value="HTH_FadR"/>
    <property type="match status" value="1"/>
</dbReference>
<dbReference type="InterPro" id="IPR014178">
    <property type="entry name" value="FA-response_TF_FadR"/>
</dbReference>
<dbReference type="InterPro" id="IPR028374">
    <property type="entry name" value="FadR_C"/>
</dbReference>
<dbReference type="InterPro" id="IPR008920">
    <property type="entry name" value="TF_FadR/GntR_C"/>
</dbReference>
<dbReference type="InterPro" id="IPR000524">
    <property type="entry name" value="Tscrpt_reg_HTH_GntR"/>
</dbReference>
<dbReference type="InterPro" id="IPR036388">
    <property type="entry name" value="WH-like_DNA-bd_sf"/>
</dbReference>
<dbReference type="InterPro" id="IPR036390">
    <property type="entry name" value="WH_DNA-bd_sf"/>
</dbReference>
<dbReference type="NCBIfam" id="TIGR02812">
    <property type="entry name" value="fadR_gamma"/>
    <property type="match status" value="1"/>
</dbReference>
<dbReference type="NCBIfam" id="NF003444">
    <property type="entry name" value="PRK04984.1"/>
    <property type="match status" value="1"/>
</dbReference>
<dbReference type="PANTHER" id="PTHR43537:SF52">
    <property type="entry name" value="FATTY ACID METABOLISM REGULATOR PROTEIN"/>
    <property type="match status" value="1"/>
</dbReference>
<dbReference type="PANTHER" id="PTHR43537">
    <property type="entry name" value="TRANSCRIPTIONAL REGULATOR, GNTR FAMILY"/>
    <property type="match status" value="1"/>
</dbReference>
<dbReference type="Pfam" id="PF07840">
    <property type="entry name" value="FadR_C"/>
    <property type="match status" value="1"/>
</dbReference>
<dbReference type="Pfam" id="PF00392">
    <property type="entry name" value="GntR"/>
    <property type="match status" value="1"/>
</dbReference>
<dbReference type="PRINTS" id="PR00035">
    <property type="entry name" value="HTHGNTR"/>
</dbReference>
<dbReference type="SMART" id="SM00345">
    <property type="entry name" value="HTH_GNTR"/>
    <property type="match status" value="1"/>
</dbReference>
<dbReference type="SUPFAM" id="SSF48008">
    <property type="entry name" value="GntR ligand-binding domain-like"/>
    <property type="match status" value="1"/>
</dbReference>
<dbReference type="SUPFAM" id="SSF46785">
    <property type="entry name" value="Winged helix' DNA-binding domain"/>
    <property type="match status" value="1"/>
</dbReference>
<dbReference type="PROSITE" id="PS50949">
    <property type="entry name" value="HTH_GNTR"/>
    <property type="match status" value="1"/>
</dbReference>
<accession>A4WBF4</accession>
<gene>
    <name evidence="1" type="primary">fadR</name>
    <name type="ordered locus">Ent638_2365</name>
</gene>